<gene>
    <name evidence="1" type="primary">psb30</name>
    <name evidence="1" type="synonym">ycf12</name>
    <name type="ordered locus">CYA_0544</name>
</gene>
<feature type="chain" id="PRO_0000242478" description="Photosystem II reaction center protein Psb30">
    <location>
        <begin position="1"/>
        <end position="35"/>
    </location>
</feature>
<feature type="transmembrane region" description="Helical" evidence="1">
    <location>
        <begin position="7"/>
        <end position="27"/>
    </location>
</feature>
<proteinExistence type="inferred from homology"/>
<evidence type="ECO:0000255" key="1">
    <source>
        <dbReference type="HAMAP-Rule" id="MF_01329"/>
    </source>
</evidence>
<protein>
    <recommendedName>
        <fullName evidence="1">Photosystem II reaction center protein Psb30</fullName>
    </recommendedName>
    <alternativeName>
        <fullName evidence="1">Photosystem II reaction center protein Ycf12</fullName>
    </alternativeName>
</protein>
<organism>
    <name type="scientific">Synechococcus sp. (strain JA-3-3Ab)</name>
    <name type="common">Cyanobacteria bacterium Yellowstone A-Prime</name>
    <dbReference type="NCBI Taxonomy" id="321327"/>
    <lineage>
        <taxon>Bacteria</taxon>
        <taxon>Bacillati</taxon>
        <taxon>Cyanobacteriota</taxon>
        <taxon>Cyanophyceae</taxon>
        <taxon>Synechococcales</taxon>
        <taxon>Synechococcaceae</taxon>
        <taxon>Synechococcus</taxon>
    </lineage>
</organism>
<keyword id="KW-0472">Membrane</keyword>
<keyword id="KW-0602">Photosynthesis</keyword>
<keyword id="KW-0604">Photosystem II</keyword>
<keyword id="KW-0793">Thylakoid</keyword>
<keyword id="KW-0812">Transmembrane</keyword>
<keyword id="KW-1133">Transmembrane helix</keyword>
<comment type="function">
    <text evidence="1">A core subunit of photosystem II (PSII), probably helps stabilize the reaction center.</text>
</comment>
<comment type="subunit">
    <text evidence="1">PSII is composed of 1 copy each of membrane proteins PsbA, PsbB, PsbC, PsbD, PsbE, PsbF, PsbH, PsbI, PsbJ, PsbK, PsbL, PsbM, PsbT, PsbX, PsbY, PsbZ, Psb30/Ycf12, peripheral proteins PsbO, CyanoQ (PsbQ), PsbU, PsbV and a large number of cofactors. It forms dimeric complexes.</text>
</comment>
<comment type="subcellular location">
    <subcellularLocation>
        <location evidence="1">Cellular thylakoid membrane</location>
        <topology evidence="1">Single-pass membrane protein</topology>
    </subcellularLocation>
</comment>
<comment type="similarity">
    <text evidence="1">Belongs to the Psb30/Ycf12 family.</text>
</comment>
<name>PSB30_SYNJA</name>
<accession>Q2JWU5</accession>
<dbReference type="EMBL" id="CP000239">
    <property type="protein sequence ID" value="ABC98761.1"/>
    <property type="molecule type" value="Genomic_DNA"/>
</dbReference>
<dbReference type="RefSeq" id="WP_011429448.1">
    <property type="nucleotide sequence ID" value="NC_007775.1"/>
</dbReference>
<dbReference type="SMR" id="Q2JWU5"/>
<dbReference type="STRING" id="321327.CYA_0544"/>
<dbReference type="KEGG" id="cya:CYA_0544"/>
<dbReference type="eggNOG" id="ENOG5030U32">
    <property type="taxonomic scope" value="Bacteria"/>
</dbReference>
<dbReference type="HOGENOM" id="CLU_196761_1_1_3"/>
<dbReference type="Proteomes" id="UP000008818">
    <property type="component" value="Chromosome"/>
</dbReference>
<dbReference type="GO" id="GO:0009523">
    <property type="term" value="C:photosystem II"/>
    <property type="evidence" value="ECO:0007669"/>
    <property type="project" value="UniProtKB-KW"/>
</dbReference>
<dbReference type="GO" id="GO:0031676">
    <property type="term" value="C:plasma membrane-derived thylakoid membrane"/>
    <property type="evidence" value="ECO:0007669"/>
    <property type="project" value="UniProtKB-SubCell"/>
</dbReference>
<dbReference type="GO" id="GO:0015979">
    <property type="term" value="P:photosynthesis"/>
    <property type="evidence" value="ECO:0007669"/>
    <property type="project" value="UniProtKB-KW"/>
</dbReference>
<dbReference type="HAMAP" id="MF_01329">
    <property type="entry name" value="PSII_Psb30_Ycf12"/>
    <property type="match status" value="1"/>
</dbReference>
<dbReference type="InterPro" id="IPR010284">
    <property type="entry name" value="PSII_Ycf12_core-subunit"/>
</dbReference>
<dbReference type="NCBIfam" id="NF010239">
    <property type="entry name" value="PRK13686.1"/>
    <property type="match status" value="1"/>
</dbReference>
<dbReference type="Pfam" id="PF05969">
    <property type="entry name" value="PSII_Ycf12"/>
    <property type="match status" value="1"/>
</dbReference>
<reference key="1">
    <citation type="journal article" date="2007" name="ISME J.">
        <title>Population level functional diversity in a microbial community revealed by comparative genomic and metagenomic analyses.</title>
        <authorList>
            <person name="Bhaya D."/>
            <person name="Grossman A.R."/>
            <person name="Steunou A.-S."/>
            <person name="Khuri N."/>
            <person name="Cohan F.M."/>
            <person name="Hamamura N."/>
            <person name="Melendrez M.C."/>
            <person name="Bateson M.M."/>
            <person name="Ward D.M."/>
            <person name="Heidelberg J.F."/>
        </authorList>
    </citation>
    <scope>NUCLEOTIDE SEQUENCE [LARGE SCALE GENOMIC DNA]</scope>
    <source>
        <strain>JA-3-3Ab</strain>
    </source>
</reference>
<sequence>MFGQYEVFVQLLLLALIVLAGPAVILLLYLRGADM</sequence>